<reference key="1">
    <citation type="journal article" date="2005" name="Dev. Genes Evol.">
        <title>Phylogenomic analysis and expression patterns of large Maf genes in Xenopus tropicalis provide new insights into the functional evolution of the gene family in osteichthyans.</title>
        <authorList>
            <person name="Coolen M."/>
            <person name="Sii-Felice K."/>
            <person name="Bronchain O."/>
            <person name="Mazabraud A."/>
            <person name="Bourrat F."/>
            <person name="Retaux S."/>
            <person name="Felder-Schmittbuhl M.-P."/>
            <person name="Mazan S."/>
            <person name="Plouhinec J.-L."/>
        </authorList>
    </citation>
    <scope>NUCLEOTIDE SEQUENCE [MRNA]</scope>
    <scope>DEVELOPMENTAL STAGE</scope>
    <source>
        <tissue>Embryo</tissue>
    </source>
</reference>
<reference key="2">
    <citation type="submission" date="2005-05" db="EMBL/GenBank/DDBJ databases">
        <authorList>
            <consortium name="NIH - Xenopus Gene Collection (XGC) project"/>
        </authorList>
    </citation>
    <scope>NUCLEOTIDE SEQUENCE [LARGE SCALE MRNA]</scope>
</reference>
<gene>
    <name type="primary">mafb</name>
</gene>
<proteinExistence type="evidence at transcript level"/>
<protein>
    <recommendedName>
        <fullName>Transcription factor MafB</fullName>
        <shortName>Maf-B</shortName>
        <shortName>XMafB</shortName>
    </recommendedName>
</protein>
<keyword id="KW-0010">Activator</keyword>
<keyword id="KW-0238">DNA-binding</keyword>
<keyword id="KW-0539">Nucleus</keyword>
<keyword id="KW-1185">Reference proteome</keyword>
<keyword id="KW-0678">Repressor</keyword>
<keyword id="KW-0804">Transcription</keyword>
<keyword id="KW-0805">Transcription regulation</keyword>
<name>MAFB_XENTR</name>
<organism>
    <name type="scientific">Xenopus tropicalis</name>
    <name type="common">Western clawed frog</name>
    <name type="synonym">Silurana tropicalis</name>
    <dbReference type="NCBI Taxonomy" id="8364"/>
    <lineage>
        <taxon>Eukaryota</taxon>
        <taxon>Metazoa</taxon>
        <taxon>Chordata</taxon>
        <taxon>Craniata</taxon>
        <taxon>Vertebrata</taxon>
        <taxon>Euteleostomi</taxon>
        <taxon>Amphibia</taxon>
        <taxon>Batrachia</taxon>
        <taxon>Anura</taxon>
        <taxon>Pipoidea</taxon>
        <taxon>Pipidae</taxon>
        <taxon>Xenopodinae</taxon>
        <taxon>Xenopus</taxon>
        <taxon>Silurana</taxon>
    </lineage>
</organism>
<feature type="chain" id="PRO_0000366127" description="Transcription factor MafB">
    <location>
        <begin position="1"/>
        <end position="316"/>
    </location>
</feature>
<feature type="domain" description="bZIP" evidence="2">
    <location>
        <begin position="231"/>
        <end position="294"/>
    </location>
</feature>
<feature type="region of interest" description="Disordered" evidence="3">
    <location>
        <begin position="40"/>
        <end position="78"/>
    </location>
</feature>
<feature type="region of interest" description="Disordered" evidence="3">
    <location>
        <begin position="116"/>
        <end position="204"/>
    </location>
</feature>
<feature type="region of interest" description="Basic motif" evidence="2">
    <location>
        <begin position="231"/>
        <end position="256"/>
    </location>
</feature>
<feature type="region of interest" description="Leucine-zipper" evidence="2">
    <location>
        <begin position="259"/>
        <end position="280"/>
    </location>
</feature>
<feature type="compositionally biased region" description="Low complexity" evidence="3">
    <location>
        <begin position="55"/>
        <end position="77"/>
    </location>
</feature>
<feature type="compositionally biased region" description="Basic residues" evidence="3">
    <location>
        <begin position="130"/>
        <end position="144"/>
    </location>
</feature>
<feature type="compositionally biased region" description="Basic residues" evidence="3">
    <location>
        <begin position="160"/>
        <end position="172"/>
    </location>
</feature>
<feature type="compositionally biased region" description="Low complexity" evidence="3">
    <location>
        <begin position="177"/>
        <end position="198"/>
    </location>
</feature>
<accession>Q504L8</accession>
<evidence type="ECO:0000250" key="1"/>
<evidence type="ECO:0000255" key="2">
    <source>
        <dbReference type="PROSITE-ProRule" id="PRU00978"/>
    </source>
</evidence>
<evidence type="ECO:0000256" key="3">
    <source>
        <dbReference type="SAM" id="MobiDB-lite"/>
    </source>
</evidence>
<evidence type="ECO:0000269" key="4">
    <source>
    </source>
</evidence>
<evidence type="ECO:0000305" key="5"/>
<comment type="function">
    <text evidence="1">Acts as a transcriptional activator or repressor. Implicated in the regulation of cell-type specific gene expression and play a role in inductive events during lens development (By similarity).</text>
</comment>
<comment type="subunit">
    <text evidence="1">Homodimer or heterodimer with other bHLH-Zip transcription factors. Binds DNA as a homodimer or a heterodimer (By similarity).</text>
</comment>
<comment type="subcellular location">
    <subcellularLocation>
        <location evidence="2">Nucleus</location>
    </subcellularLocation>
</comment>
<comment type="developmental stage">
    <text evidence="4">Expressed in the somites at stage 19 onwards. Expressed in the developing hindbrain between neural plate at stage 32. Expressed in the ventral blood islands from stage 22 until stage 28. Expressed in the condensing pronephros at stage 24. Expressed in the pronephric tubules at stage 33. Expressed in the presumptive lens-forming ectoderm (PLE) at stage 22 and during lens formation. Expressed in the invaginating placode at stage 28. Expressed in lens epithelia at stage 33. Expressed in the rhombencephalon at least until stage 40. Expressed in the olfactory bulb and the thalamus at stage 43. Expressed in the neural crest cells.</text>
</comment>
<comment type="similarity">
    <text evidence="5">Belongs to the bZIP family. Maf subfamily.</text>
</comment>
<dbReference type="EMBL" id="DQ018731">
    <property type="protein sequence ID" value="AAY41824.1"/>
    <property type="molecule type" value="mRNA"/>
</dbReference>
<dbReference type="EMBL" id="BC094951">
    <property type="protein sequence ID" value="AAH94951.1"/>
    <property type="molecule type" value="mRNA"/>
</dbReference>
<dbReference type="RefSeq" id="NP_001025694.1">
    <property type="nucleotide sequence ID" value="NM_001030523.1"/>
</dbReference>
<dbReference type="SMR" id="Q504L8"/>
<dbReference type="FunCoup" id="Q504L8">
    <property type="interactions" value="1287"/>
</dbReference>
<dbReference type="STRING" id="8364.ENSXETP00000040525"/>
<dbReference type="GeneID" id="595086"/>
<dbReference type="KEGG" id="xtr:595086"/>
<dbReference type="AGR" id="Xenbase:XB-GENE-6085859"/>
<dbReference type="CTD" id="9935"/>
<dbReference type="Xenbase" id="XB-GENE-6085859">
    <property type="gene designation" value="mafb"/>
</dbReference>
<dbReference type="InParanoid" id="Q504L8"/>
<dbReference type="OMA" id="PTEQKHH"/>
<dbReference type="OrthoDB" id="5974330at2759"/>
<dbReference type="PhylomeDB" id="Q504L8"/>
<dbReference type="Proteomes" id="UP000008143">
    <property type="component" value="Chromosome 10"/>
</dbReference>
<dbReference type="Bgee" id="ENSXETG00000037195">
    <property type="expression patterns" value="Expressed in mesonephros and 12 other cell types or tissues"/>
</dbReference>
<dbReference type="GO" id="GO:0005634">
    <property type="term" value="C:nucleus"/>
    <property type="evidence" value="ECO:0007669"/>
    <property type="project" value="UniProtKB-SubCell"/>
</dbReference>
<dbReference type="GO" id="GO:0003677">
    <property type="term" value="F:DNA binding"/>
    <property type="evidence" value="ECO:0007669"/>
    <property type="project" value="UniProtKB-KW"/>
</dbReference>
<dbReference type="GO" id="GO:0003700">
    <property type="term" value="F:DNA-binding transcription factor activity"/>
    <property type="evidence" value="ECO:0007669"/>
    <property type="project" value="InterPro"/>
</dbReference>
<dbReference type="GO" id="GO:0006355">
    <property type="term" value="P:regulation of DNA-templated transcription"/>
    <property type="evidence" value="ECO:0000250"/>
    <property type="project" value="UniProtKB"/>
</dbReference>
<dbReference type="CDD" id="cd14718">
    <property type="entry name" value="bZIP_Maf_large"/>
    <property type="match status" value="1"/>
</dbReference>
<dbReference type="FunFam" id="1.20.5.170:FF:000016">
    <property type="entry name" value="MAF bZIP transcription factor"/>
    <property type="match status" value="1"/>
</dbReference>
<dbReference type="Gene3D" id="1.20.5.170">
    <property type="match status" value="1"/>
</dbReference>
<dbReference type="InterPro" id="IPR004827">
    <property type="entry name" value="bZIP"/>
</dbReference>
<dbReference type="InterPro" id="IPR004826">
    <property type="entry name" value="bZIP_Maf"/>
</dbReference>
<dbReference type="InterPro" id="IPR046347">
    <property type="entry name" value="bZIP_sf"/>
</dbReference>
<dbReference type="InterPro" id="IPR013592">
    <property type="entry name" value="Maf_TF_N"/>
</dbReference>
<dbReference type="InterPro" id="IPR008917">
    <property type="entry name" value="TF_DNA-bd_sf"/>
</dbReference>
<dbReference type="InterPro" id="IPR024874">
    <property type="entry name" value="Transcription_factor_Maf_fam"/>
</dbReference>
<dbReference type="PANTHER" id="PTHR10129">
    <property type="entry name" value="TRANSCRIPTION FACTOR MAF"/>
    <property type="match status" value="1"/>
</dbReference>
<dbReference type="PANTHER" id="PTHR10129:SF10">
    <property type="entry name" value="TRANSCRIPTION FACTOR MAFB"/>
    <property type="match status" value="1"/>
</dbReference>
<dbReference type="Pfam" id="PF03131">
    <property type="entry name" value="bZIP_Maf"/>
    <property type="match status" value="1"/>
</dbReference>
<dbReference type="Pfam" id="PF08383">
    <property type="entry name" value="Maf_N"/>
    <property type="match status" value="1"/>
</dbReference>
<dbReference type="SMART" id="SM00338">
    <property type="entry name" value="BRLZ"/>
    <property type="match status" value="1"/>
</dbReference>
<dbReference type="SUPFAM" id="SSF47454">
    <property type="entry name" value="A DNA-binding domain in eukaryotic transcription factors"/>
    <property type="match status" value="1"/>
</dbReference>
<dbReference type="SUPFAM" id="SSF57959">
    <property type="entry name" value="Leucine zipper domain"/>
    <property type="match status" value="1"/>
</dbReference>
<dbReference type="PROSITE" id="PS50217">
    <property type="entry name" value="BZIP"/>
    <property type="match status" value="1"/>
</dbReference>
<sequence length="316" mass="36311">MAGELSIATELPTSPLAMEYVNDFDLMKFDVKKEPLGGRPDRAIRPCNRLQPTGSVSSTPISTPCSSVPSSPSFSPTEQKTHMDELYWMTNSYQQVNPEALNLTPEDAVEALIGPHQMPPQMQGYDSFRGHHHHHHNNHHHQNHHQYQGLPHEEMGLPHQHPHHHHHHHHHQPSPSPSGSSSSSQQLQNSHQQHQNSSAVEDRFSDDQLVSMSVRELNRHLRGFTKDDVIRLKQKRRTLKNRGYAQSCRFKRVQQKHHLENEKTQLIQQVEQLKLEVSRLARERDAYKIKCEKLANTTFREAGSTSDNPSSPEFFM</sequence>